<sequence>MATFEGRFTDAQGLRIAVVVARFNDLVTGKLLSGCLDCLHRHGVDVTPESSQLDVAWVPGSFELPVAAQNLARSGRYQVLITLGAVIRGDTPHFDVVVAEASKGIAAVARDTGVPVIFGVLTTDTMQQALERAGIKSNLGWSYGLQALEMGSLMHALESEA</sequence>
<protein>
    <recommendedName>
        <fullName evidence="1">6,7-dimethyl-8-ribityllumazine synthase</fullName>
        <shortName evidence="1">DMRL synthase</shortName>
        <shortName evidence="1">LS</shortName>
        <shortName evidence="1">Lumazine synthase</shortName>
        <ecNumber evidence="1">2.5.1.78</ecNumber>
    </recommendedName>
</protein>
<proteinExistence type="inferred from homology"/>
<accession>A5GHU9</accession>
<name>RISB_SYNPW</name>
<feature type="chain" id="PRO_1000040533" description="6,7-dimethyl-8-ribityllumazine synthase">
    <location>
        <begin position="1"/>
        <end position="161"/>
    </location>
</feature>
<feature type="active site" description="Proton donor" evidence="1">
    <location>
        <position position="93"/>
    </location>
</feature>
<feature type="binding site" evidence="1">
    <location>
        <position position="23"/>
    </location>
    <ligand>
        <name>5-amino-6-(D-ribitylamino)uracil</name>
        <dbReference type="ChEBI" id="CHEBI:15934"/>
    </ligand>
</feature>
<feature type="binding site" evidence="1">
    <location>
        <begin position="61"/>
        <end position="63"/>
    </location>
    <ligand>
        <name>5-amino-6-(D-ribitylamino)uracil</name>
        <dbReference type="ChEBI" id="CHEBI:15934"/>
    </ligand>
</feature>
<feature type="binding site" evidence="1">
    <location>
        <begin position="85"/>
        <end position="87"/>
    </location>
    <ligand>
        <name>5-amino-6-(D-ribitylamino)uracil</name>
        <dbReference type="ChEBI" id="CHEBI:15934"/>
    </ligand>
</feature>
<feature type="binding site" evidence="1">
    <location>
        <begin position="90"/>
        <end position="91"/>
    </location>
    <ligand>
        <name>(2S)-2-hydroxy-3-oxobutyl phosphate</name>
        <dbReference type="ChEBI" id="CHEBI:58830"/>
    </ligand>
</feature>
<feature type="binding site" evidence="1">
    <location>
        <position position="118"/>
    </location>
    <ligand>
        <name>5-amino-6-(D-ribitylamino)uracil</name>
        <dbReference type="ChEBI" id="CHEBI:15934"/>
    </ligand>
</feature>
<feature type="binding site" evidence="1">
    <location>
        <position position="132"/>
    </location>
    <ligand>
        <name>(2S)-2-hydroxy-3-oxobutyl phosphate</name>
        <dbReference type="ChEBI" id="CHEBI:58830"/>
    </ligand>
</feature>
<dbReference type="EC" id="2.5.1.78" evidence="1"/>
<dbReference type="EMBL" id="CT971583">
    <property type="protein sequence ID" value="CAK22514.1"/>
    <property type="molecule type" value="Genomic_DNA"/>
</dbReference>
<dbReference type="SMR" id="A5GHU9"/>
<dbReference type="STRING" id="32051.SynWH7803_0088"/>
<dbReference type="KEGG" id="syx:SynWH7803_0088"/>
<dbReference type="eggNOG" id="COG0054">
    <property type="taxonomic scope" value="Bacteria"/>
</dbReference>
<dbReference type="HOGENOM" id="CLU_089358_1_0_3"/>
<dbReference type="OrthoDB" id="9809709at2"/>
<dbReference type="UniPathway" id="UPA00275">
    <property type="reaction ID" value="UER00404"/>
</dbReference>
<dbReference type="Proteomes" id="UP000001566">
    <property type="component" value="Chromosome"/>
</dbReference>
<dbReference type="GO" id="GO:0005829">
    <property type="term" value="C:cytosol"/>
    <property type="evidence" value="ECO:0007669"/>
    <property type="project" value="TreeGrafter"/>
</dbReference>
<dbReference type="GO" id="GO:0009349">
    <property type="term" value="C:riboflavin synthase complex"/>
    <property type="evidence" value="ECO:0007669"/>
    <property type="project" value="InterPro"/>
</dbReference>
<dbReference type="GO" id="GO:0000906">
    <property type="term" value="F:6,7-dimethyl-8-ribityllumazine synthase activity"/>
    <property type="evidence" value="ECO:0007669"/>
    <property type="project" value="UniProtKB-UniRule"/>
</dbReference>
<dbReference type="GO" id="GO:0009231">
    <property type="term" value="P:riboflavin biosynthetic process"/>
    <property type="evidence" value="ECO:0007669"/>
    <property type="project" value="UniProtKB-UniRule"/>
</dbReference>
<dbReference type="CDD" id="cd09209">
    <property type="entry name" value="Lumazine_synthase-I"/>
    <property type="match status" value="1"/>
</dbReference>
<dbReference type="Gene3D" id="3.40.50.960">
    <property type="entry name" value="Lumazine/riboflavin synthase"/>
    <property type="match status" value="1"/>
</dbReference>
<dbReference type="HAMAP" id="MF_00178">
    <property type="entry name" value="Lumazine_synth"/>
    <property type="match status" value="1"/>
</dbReference>
<dbReference type="InterPro" id="IPR034964">
    <property type="entry name" value="LS"/>
</dbReference>
<dbReference type="InterPro" id="IPR002180">
    <property type="entry name" value="LS/RS"/>
</dbReference>
<dbReference type="InterPro" id="IPR036467">
    <property type="entry name" value="LS/RS_sf"/>
</dbReference>
<dbReference type="NCBIfam" id="TIGR00114">
    <property type="entry name" value="lumazine-synth"/>
    <property type="match status" value="1"/>
</dbReference>
<dbReference type="PANTHER" id="PTHR21058:SF0">
    <property type="entry name" value="6,7-DIMETHYL-8-RIBITYLLUMAZINE SYNTHASE"/>
    <property type="match status" value="1"/>
</dbReference>
<dbReference type="PANTHER" id="PTHR21058">
    <property type="entry name" value="6,7-DIMETHYL-8-RIBITYLLUMAZINE SYNTHASE DMRL SYNTHASE LUMAZINE SYNTHASE"/>
    <property type="match status" value="1"/>
</dbReference>
<dbReference type="Pfam" id="PF00885">
    <property type="entry name" value="DMRL_synthase"/>
    <property type="match status" value="1"/>
</dbReference>
<dbReference type="SUPFAM" id="SSF52121">
    <property type="entry name" value="Lumazine synthase"/>
    <property type="match status" value="1"/>
</dbReference>
<evidence type="ECO:0000255" key="1">
    <source>
        <dbReference type="HAMAP-Rule" id="MF_00178"/>
    </source>
</evidence>
<comment type="function">
    <text evidence="1">Catalyzes the formation of 6,7-dimethyl-8-ribityllumazine by condensation of 5-amino-6-(D-ribitylamino)uracil with 3,4-dihydroxy-2-butanone 4-phosphate. This is the penultimate step in the biosynthesis of riboflavin.</text>
</comment>
<comment type="catalytic activity">
    <reaction evidence="1">
        <text>(2S)-2-hydroxy-3-oxobutyl phosphate + 5-amino-6-(D-ribitylamino)uracil = 6,7-dimethyl-8-(1-D-ribityl)lumazine + phosphate + 2 H2O + H(+)</text>
        <dbReference type="Rhea" id="RHEA:26152"/>
        <dbReference type="ChEBI" id="CHEBI:15377"/>
        <dbReference type="ChEBI" id="CHEBI:15378"/>
        <dbReference type="ChEBI" id="CHEBI:15934"/>
        <dbReference type="ChEBI" id="CHEBI:43474"/>
        <dbReference type="ChEBI" id="CHEBI:58201"/>
        <dbReference type="ChEBI" id="CHEBI:58830"/>
        <dbReference type="EC" id="2.5.1.78"/>
    </reaction>
</comment>
<comment type="pathway">
    <text evidence="1">Cofactor biosynthesis; riboflavin biosynthesis; riboflavin from 2-hydroxy-3-oxobutyl phosphate and 5-amino-6-(D-ribitylamino)uracil: step 1/2.</text>
</comment>
<comment type="similarity">
    <text evidence="1">Belongs to the DMRL synthase family.</text>
</comment>
<reference key="1">
    <citation type="submission" date="2006-05" db="EMBL/GenBank/DDBJ databases">
        <authorList>
            <consortium name="Genoscope"/>
        </authorList>
    </citation>
    <scope>NUCLEOTIDE SEQUENCE [LARGE SCALE GENOMIC DNA]</scope>
    <source>
        <strain>WH7803</strain>
    </source>
</reference>
<organism>
    <name type="scientific">Synechococcus sp. (strain WH7803)</name>
    <dbReference type="NCBI Taxonomy" id="32051"/>
    <lineage>
        <taxon>Bacteria</taxon>
        <taxon>Bacillati</taxon>
        <taxon>Cyanobacteriota</taxon>
        <taxon>Cyanophyceae</taxon>
        <taxon>Synechococcales</taxon>
        <taxon>Synechococcaceae</taxon>
        <taxon>Synechococcus</taxon>
    </lineage>
</organism>
<gene>
    <name evidence="1" type="primary">ribH</name>
    <name type="ordered locus">SynWH7803_0088</name>
</gene>
<keyword id="KW-1185">Reference proteome</keyword>
<keyword id="KW-0686">Riboflavin biosynthesis</keyword>
<keyword id="KW-0808">Transferase</keyword>